<reference key="1">
    <citation type="submission" date="2007-11" db="EMBL/GenBank/DDBJ databases">
        <authorList>
            <consortium name="The Salmonella enterica serovar Arizonae Genome Sequencing Project"/>
            <person name="McClelland M."/>
            <person name="Sanderson E.K."/>
            <person name="Porwollik S."/>
            <person name="Spieth J."/>
            <person name="Clifton W.S."/>
            <person name="Fulton R."/>
            <person name="Chunyan W."/>
            <person name="Wollam A."/>
            <person name="Shah N."/>
            <person name="Pepin K."/>
            <person name="Bhonagiri V."/>
            <person name="Nash W."/>
            <person name="Johnson M."/>
            <person name="Thiruvilangam P."/>
            <person name="Wilson R."/>
        </authorList>
    </citation>
    <scope>NUCLEOTIDE SEQUENCE [LARGE SCALE GENOMIC DNA]</scope>
    <source>
        <strain>ATCC BAA-731 / CDC346-86 / RSK2980</strain>
    </source>
</reference>
<organism>
    <name type="scientific">Salmonella arizonae (strain ATCC BAA-731 / CDC346-86 / RSK2980)</name>
    <dbReference type="NCBI Taxonomy" id="41514"/>
    <lineage>
        <taxon>Bacteria</taxon>
        <taxon>Pseudomonadati</taxon>
        <taxon>Pseudomonadota</taxon>
        <taxon>Gammaproteobacteria</taxon>
        <taxon>Enterobacterales</taxon>
        <taxon>Enterobacteriaceae</taxon>
        <taxon>Salmonella</taxon>
    </lineage>
</organism>
<name>ARGA_SALAR</name>
<proteinExistence type="inferred from homology"/>
<dbReference type="EC" id="2.3.1.1" evidence="1"/>
<dbReference type="EMBL" id="CP000880">
    <property type="protein sequence ID" value="ABX24435.1"/>
    <property type="molecule type" value="Genomic_DNA"/>
</dbReference>
<dbReference type="SMR" id="A9MS91"/>
<dbReference type="STRING" id="41514.SARI_04668"/>
<dbReference type="KEGG" id="ses:SARI_04668"/>
<dbReference type="HOGENOM" id="CLU_024773_0_0_6"/>
<dbReference type="UniPathway" id="UPA00068">
    <property type="reaction ID" value="UER00106"/>
</dbReference>
<dbReference type="Proteomes" id="UP000002084">
    <property type="component" value="Chromosome"/>
</dbReference>
<dbReference type="GO" id="GO:0005737">
    <property type="term" value="C:cytoplasm"/>
    <property type="evidence" value="ECO:0007669"/>
    <property type="project" value="UniProtKB-SubCell"/>
</dbReference>
<dbReference type="GO" id="GO:0004042">
    <property type="term" value="F:L-glutamate N-acetyltransferase activity"/>
    <property type="evidence" value="ECO:0007669"/>
    <property type="project" value="UniProtKB-UniRule"/>
</dbReference>
<dbReference type="GO" id="GO:0006526">
    <property type="term" value="P:L-arginine biosynthetic process"/>
    <property type="evidence" value="ECO:0007669"/>
    <property type="project" value="UniProtKB-UniRule"/>
</dbReference>
<dbReference type="CDD" id="cd04237">
    <property type="entry name" value="AAK_NAGS-ABP"/>
    <property type="match status" value="1"/>
</dbReference>
<dbReference type="CDD" id="cd04301">
    <property type="entry name" value="NAT_SF"/>
    <property type="match status" value="1"/>
</dbReference>
<dbReference type="FunFam" id="3.40.1160.10:FF:000005">
    <property type="entry name" value="Amino-acid acetyltransferase"/>
    <property type="match status" value="1"/>
</dbReference>
<dbReference type="FunFam" id="3.40.630.30:FF:000009">
    <property type="entry name" value="Amino-acid acetyltransferase"/>
    <property type="match status" value="1"/>
</dbReference>
<dbReference type="Gene3D" id="3.40.630.30">
    <property type="match status" value="1"/>
</dbReference>
<dbReference type="Gene3D" id="3.40.1160.10">
    <property type="entry name" value="Acetylglutamate kinase-like"/>
    <property type="match status" value="1"/>
</dbReference>
<dbReference type="HAMAP" id="MF_01105">
    <property type="entry name" value="N_acetyl_glu_synth"/>
    <property type="match status" value="1"/>
</dbReference>
<dbReference type="InterPro" id="IPR036393">
    <property type="entry name" value="AceGlu_kinase-like_sf"/>
</dbReference>
<dbReference type="InterPro" id="IPR016181">
    <property type="entry name" value="Acyl_CoA_acyltransferase"/>
</dbReference>
<dbReference type="InterPro" id="IPR001048">
    <property type="entry name" value="Asp/Glu/Uridylate_kinase"/>
</dbReference>
<dbReference type="InterPro" id="IPR000182">
    <property type="entry name" value="GNAT_dom"/>
</dbReference>
<dbReference type="InterPro" id="IPR033719">
    <property type="entry name" value="NAGS_kin"/>
</dbReference>
<dbReference type="InterPro" id="IPR010167">
    <property type="entry name" value="NH2A_AcTrfase"/>
</dbReference>
<dbReference type="NCBIfam" id="TIGR01890">
    <property type="entry name" value="N-Ac-Glu-synth"/>
    <property type="match status" value="1"/>
</dbReference>
<dbReference type="NCBIfam" id="NF003641">
    <property type="entry name" value="PRK05279.1"/>
    <property type="match status" value="1"/>
</dbReference>
<dbReference type="PANTHER" id="PTHR30602">
    <property type="entry name" value="AMINO-ACID ACETYLTRANSFERASE"/>
    <property type="match status" value="1"/>
</dbReference>
<dbReference type="PANTHER" id="PTHR30602:SF12">
    <property type="entry name" value="AMINO-ACID ACETYLTRANSFERASE NAGS1, CHLOROPLASTIC-RELATED"/>
    <property type="match status" value="1"/>
</dbReference>
<dbReference type="Pfam" id="PF00696">
    <property type="entry name" value="AA_kinase"/>
    <property type="match status" value="1"/>
</dbReference>
<dbReference type="Pfam" id="PF00583">
    <property type="entry name" value="Acetyltransf_1"/>
    <property type="match status" value="1"/>
</dbReference>
<dbReference type="PIRSF" id="PIRSF000423">
    <property type="entry name" value="ArgA"/>
    <property type="match status" value="1"/>
</dbReference>
<dbReference type="SUPFAM" id="SSF55729">
    <property type="entry name" value="Acyl-CoA N-acyltransferases (Nat)"/>
    <property type="match status" value="1"/>
</dbReference>
<dbReference type="SUPFAM" id="SSF53633">
    <property type="entry name" value="Carbamate kinase-like"/>
    <property type="match status" value="1"/>
</dbReference>
<dbReference type="PROSITE" id="PS51186">
    <property type="entry name" value="GNAT"/>
    <property type="match status" value="1"/>
</dbReference>
<comment type="catalytic activity">
    <reaction evidence="1">
        <text>L-glutamate + acetyl-CoA = N-acetyl-L-glutamate + CoA + H(+)</text>
        <dbReference type="Rhea" id="RHEA:24292"/>
        <dbReference type="ChEBI" id="CHEBI:15378"/>
        <dbReference type="ChEBI" id="CHEBI:29985"/>
        <dbReference type="ChEBI" id="CHEBI:44337"/>
        <dbReference type="ChEBI" id="CHEBI:57287"/>
        <dbReference type="ChEBI" id="CHEBI:57288"/>
        <dbReference type="EC" id="2.3.1.1"/>
    </reaction>
</comment>
<comment type="pathway">
    <text evidence="1">Amino-acid biosynthesis; L-arginine biosynthesis; N(2)-acetyl-L-ornithine from L-glutamate: step 1/4.</text>
</comment>
<comment type="subunit">
    <text evidence="1">Homohexamer.</text>
</comment>
<comment type="subcellular location">
    <subcellularLocation>
        <location evidence="1">Cytoplasm</location>
    </subcellularLocation>
</comment>
<comment type="similarity">
    <text evidence="1">Belongs to the acetyltransferase family. ArgA subfamily.</text>
</comment>
<protein>
    <recommendedName>
        <fullName evidence="1">Amino-acid acetyltransferase</fullName>
        <ecNumber evidence="1">2.3.1.1</ecNumber>
    </recommendedName>
    <alternativeName>
        <fullName evidence="1">N-acetylglutamate synthase</fullName>
        <shortName evidence="1">AGS</shortName>
        <shortName evidence="1">NAGS</shortName>
    </alternativeName>
</protein>
<evidence type="ECO:0000255" key="1">
    <source>
        <dbReference type="HAMAP-Rule" id="MF_01105"/>
    </source>
</evidence>
<gene>
    <name evidence="1" type="primary">argA</name>
    <name type="ordered locus">SARI_04668</name>
</gene>
<accession>A9MS91</accession>
<feature type="chain" id="PRO_1000084822" description="Amino-acid acetyltransferase">
    <location>
        <begin position="1"/>
        <end position="443"/>
    </location>
</feature>
<feature type="domain" description="N-acetyltransferase" evidence="1">
    <location>
        <begin position="296"/>
        <end position="436"/>
    </location>
</feature>
<keyword id="KW-0012">Acyltransferase</keyword>
<keyword id="KW-0028">Amino-acid biosynthesis</keyword>
<keyword id="KW-0055">Arginine biosynthesis</keyword>
<keyword id="KW-0963">Cytoplasm</keyword>
<keyword id="KW-1185">Reference proteome</keyword>
<keyword id="KW-0808">Transferase</keyword>
<sequence>MIKERRTELVEGFRHSVPYINTHRGKTFVIMLGGEAIEHDNFSSIVNDIGLLHSLGIRLVVVYGARPQIDANLAAHHHEPIYHKNTRVTDAKTLELVKQAAGLLQLDITARLSMSLNNTPLQGAHINVVSGNFTIAQPLGVDDGVDYCHSGRIRRIDEDAINRQLDNGAIVLIGPVAVSVTGESFNLTSEEIATQLAVKLKAEKMIGFCSSQGVTNSKGDVISELFPNEAQARVEELEAQGDYNSGTVRFLRGAVKACRSGVRRCHLISYQEDGTLLQELFSREGIGTQIVMESAEQIRRATINDIGGILELIRPLEQQGILVRRSREQLEMEIDKFTIIQRDNMTIACAALYPFVEEKIGEMACVAVHPDYRSSSRGEILLERIAAQARQMGLSKLFVLTTRSIHWFQERGFTPVDIELLPESKKKMYNYQRRSKVLIADLG</sequence>